<dbReference type="EMBL" id="CP000859">
    <property type="protein sequence ID" value="ABW66519.1"/>
    <property type="molecule type" value="Genomic_DNA"/>
</dbReference>
<dbReference type="RefSeq" id="WP_012174137.1">
    <property type="nucleotide sequence ID" value="NC_009943.1"/>
</dbReference>
<dbReference type="SMR" id="A8ZV58"/>
<dbReference type="STRING" id="96561.Dole_0709"/>
<dbReference type="KEGG" id="dol:Dole_0709"/>
<dbReference type="eggNOG" id="COG0088">
    <property type="taxonomic scope" value="Bacteria"/>
</dbReference>
<dbReference type="HOGENOM" id="CLU_041575_5_2_7"/>
<dbReference type="OrthoDB" id="9803201at2"/>
<dbReference type="Proteomes" id="UP000008561">
    <property type="component" value="Chromosome"/>
</dbReference>
<dbReference type="GO" id="GO:1990904">
    <property type="term" value="C:ribonucleoprotein complex"/>
    <property type="evidence" value="ECO:0007669"/>
    <property type="project" value="UniProtKB-KW"/>
</dbReference>
<dbReference type="GO" id="GO:0005840">
    <property type="term" value="C:ribosome"/>
    <property type="evidence" value="ECO:0007669"/>
    <property type="project" value="UniProtKB-KW"/>
</dbReference>
<dbReference type="GO" id="GO:0019843">
    <property type="term" value="F:rRNA binding"/>
    <property type="evidence" value="ECO:0007669"/>
    <property type="project" value="UniProtKB-UniRule"/>
</dbReference>
<dbReference type="GO" id="GO:0003735">
    <property type="term" value="F:structural constituent of ribosome"/>
    <property type="evidence" value="ECO:0007669"/>
    <property type="project" value="InterPro"/>
</dbReference>
<dbReference type="GO" id="GO:0006412">
    <property type="term" value="P:translation"/>
    <property type="evidence" value="ECO:0007669"/>
    <property type="project" value="UniProtKB-UniRule"/>
</dbReference>
<dbReference type="Gene3D" id="3.40.1370.10">
    <property type="match status" value="1"/>
</dbReference>
<dbReference type="HAMAP" id="MF_01328_B">
    <property type="entry name" value="Ribosomal_uL4_B"/>
    <property type="match status" value="1"/>
</dbReference>
<dbReference type="InterPro" id="IPR002136">
    <property type="entry name" value="Ribosomal_uL4"/>
</dbReference>
<dbReference type="InterPro" id="IPR013005">
    <property type="entry name" value="Ribosomal_uL4-like"/>
</dbReference>
<dbReference type="InterPro" id="IPR023574">
    <property type="entry name" value="Ribosomal_uL4_dom_sf"/>
</dbReference>
<dbReference type="NCBIfam" id="TIGR03953">
    <property type="entry name" value="rplD_bact"/>
    <property type="match status" value="1"/>
</dbReference>
<dbReference type="PANTHER" id="PTHR10746">
    <property type="entry name" value="50S RIBOSOMAL PROTEIN L4"/>
    <property type="match status" value="1"/>
</dbReference>
<dbReference type="PANTHER" id="PTHR10746:SF6">
    <property type="entry name" value="LARGE RIBOSOMAL SUBUNIT PROTEIN UL4M"/>
    <property type="match status" value="1"/>
</dbReference>
<dbReference type="Pfam" id="PF00573">
    <property type="entry name" value="Ribosomal_L4"/>
    <property type="match status" value="1"/>
</dbReference>
<dbReference type="SUPFAM" id="SSF52166">
    <property type="entry name" value="Ribosomal protein L4"/>
    <property type="match status" value="1"/>
</dbReference>
<protein>
    <recommendedName>
        <fullName evidence="1">Large ribosomal subunit protein uL4</fullName>
    </recommendedName>
    <alternativeName>
        <fullName evidence="3">50S ribosomal protein L4</fullName>
    </alternativeName>
</protein>
<name>RL4_DESOH</name>
<gene>
    <name evidence="1" type="primary">rplD</name>
    <name type="ordered locus">Dole_0709</name>
</gene>
<sequence>MAVVDIKNMNGETVSQAELPDSIFDVEVKSSVLHEVVKMQLARRRSGTASTKGRSDVAGSRAKLFRQKGTGRARRGDVKSPLLKGGGVVFGPHPRSFDYSVPKKVRKLALKMALTSKLRDNTLTVVDQFRFDRIKTKDFVGAINALGAANALVISDGSETLEKSARNVPKVKVLKCEGLNVYDILKYKNLVLPEAAIKMIEGRLL</sequence>
<reference key="1">
    <citation type="submission" date="2007-10" db="EMBL/GenBank/DDBJ databases">
        <title>Complete sequence of Desulfococcus oleovorans Hxd3.</title>
        <authorList>
            <consortium name="US DOE Joint Genome Institute"/>
            <person name="Copeland A."/>
            <person name="Lucas S."/>
            <person name="Lapidus A."/>
            <person name="Barry K."/>
            <person name="Glavina del Rio T."/>
            <person name="Dalin E."/>
            <person name="Tice H."/>
            <person name="Pitluck S."/>
            <person name="Kiss H."/>
            <person name="Brettin T."/>
            <person name="Bruce D."/>
            <person name="Detter J.C."/>
            <person name="Han C."/>
            <person name="Schmutz J."/>
            <person name="Larimer F."/>
            <person name="Land M."/>
            <person name="Hauser L."/>
            <person name="Kyrpides N."/>
            <person name="Kim E."/>
            <person name="Wawrik B."/>
            <person name="Richardson P."/>
        </authorList>
    </citation>
    <scope>NUCLEOTIDE SEQUENCE [LARGE SCALE GENOMIC DNA]</scope>
    <source>
        <strain>DSM 6200 / JCM 39069 / Hxd3</strain>
    </source>
</reference>
<comment type="function">
    <text evidence="1">One of the primary rRNA binding proteins, this protein initially binds near the 5'-end of the 23S rRNA. It is important during the early stages of 50S assembly. It makes multiple contacts with different domains of the 23S rRNA in the assembled 50S subunit and ribosome.</text>
</comment>
<comment type="function">
    <text evidence="1">Forms part of the polypeptide exit tunnel.</text>
</comment>
<comment type="subunit">
    <text evidence="1">Part of the 50S ribosomal subunit.</text>
</comment>
<comment type="similarity">
    <text evidence="1">Belongs to the universal ribosomal protein uL4 family.</text>
</comment>
<evidence type="ECO:0000255" key="1">
    <source>
        <dbReference type="HAMAP-Rule" id="MF_01328"/>
    </source>
</evidence>
<evidence type="ECO:0000256" key="2">
    <source>
        <dbReference type="SAM" id="MobiDB-lite"/>
    </source>
</evidence>
<evidence type="ECO:0000305" key="3"/>
<keyword id="KW-1185">Reference proteome</keyword>
<keyword id="KW-0687">Ribonucleoprotein</keyword>
<keyword id="KW-0689">Ribosomal protein</keyword>
<keyword id="KW-0694">RNA-binding</keyword>
<keyword id="KW-0699">rRNA-binding</keyword>
<organism>
    <name type="scientific">Desulfosudis oleivorans (strain DSM 6200 / JCM 39069 / Hxd3)</name>
    <name type="common">Desulfococcus oleovorans</name>
    <dbReference type="NCBI Taxonomy" id="96561"/>
    <lineage>
        <taxon>Bacteria</taxon>
        <taxon>Pseudomonadati</taxon>
        <taxon>Thermodesulfobacteriota</taxon>
        <taxon>Desulfobacteria</taxon>
        <taxon>Desulfobacterales</taxon>
        <taxon>Desulfosudaceae</taxon>
        <taxon>Desulfosudis</taxon>
    </lineage>
</organism>
<feature type="chain" id="PRO_1000142115" description="Large ribosomal subunit protein uL4">
    <location>
        <begin position="1"/>
        <end position="205"/>
    </location>
</feature>
<feature type="region of interest" description="Disordered" evidence="2">
    <location>
        <begin position="43"/>
        <end position="77"/>
    </location>
</feature>
<feature type="compositionally biased region" description="Basic residues" evidence="2">
    <location>
        <begin position="63"/>
        <end position="73"/>
    </location>
</feature>
<proteinExistence type="inferred from homology"/>
<accession>A8ZV58</accession>